<reference key="1">
    <citation type="submission" date="2006-10" db="EMBL/GenBank/DDBJ databases">
        <title>Complete sequence of Methanosaeta thermophila PT.</title>
        <authorList>
            <consortium name="US DOE Joint Genome Institute"/>
            <person name="Copeland A."/>
            <person name="Lucas S."/>
            <person name="Lapidus A."/>
            <person name="Barry K."/>
            <person name="Detter J.C."/>
            <person name="Glavina del Rio T."/>
            <person name="Hammon N."/>
            <person name="Israni S."/>
            <person name="Pitluck S."/>
            <person name="Chain P."/>
            <person name="Malfatti S."/>
            <person name="Shin M."/>
            <person name="Vergez L."/>
            <person name="Schmutz J."/>
            <person name="Larimer F."/>
            <person name="Land M."/>
            <person name="Hauser L."/>
            <person name="Kyrpides N."/>
            <person name="Kim E."/>
            <person name="Smith K.S."/>
            <person name="Ingram-Smith C."/>
            <person name="Richardson P."/>
        </authorList>
    </citation>
    <scope>NUCLEOTIDE SEQUENCE [LARGE SCALE GENOMIC DNA]</scope>
    <source>
        <strain>DSM 6194 / JCM 14653 / NBRC 101360 / PT</strain>
    </source>
</reference>
<accession>A0B9W7</accession>
<proteinExistence type="inferred from homology"/>
<name>RL2_METTP</name>
<gene>
    <name evidence="1" type="primary">rpl2</name>
    <name type="ordered locus">Mthe_1725</name>
</gene>
<protein>
    <recommendedName>
        <fullName evidence="1">Large ribosomal subunit protein uL2</fullName>
    </recommendedName>
    <alternativeName>
        <fullName evidence="3">50S ribosomal protein L2</fullName>
    </alternativeName>
</protein>
<comment type="function">
    <text evidence="1">One of the primary rRNA binding proteins. Required for association of the 30S and 50S subunits to form the 70S ribosome, for tRNA binding and peptide bond formation. It has been suggested to have peptidyltransferase activity; this is somewhat controversial. Makes several contacts with the 16S rRNA in the 70S ribosome.</text>
</comment>
<comment type="subunit">
    <text evidence="1">Part of the 50S ribosomal subunit. Forms a bridge to the 30S subunit in the 70S ribosome.</text>
</comment>
<comment type="similarity">
    <text evidence="1">Belongs to the universal ribosomal protein uL2 family.</text>
</comment>
<sequence length="236" mass="25187">MGKRIISQNRGKGTPTYRAPSHRYRADIKHIKFSGDLVRGIVEDIMHDPARTAPVALVRLENGEKQYVLATEGTYIGQEIACGPAAEIQPGNTLPLASIPEGMPICNIESKPGHGGQFARASGVYGILVAHDVGATVVQLPSGEMKWLNPNCLATIGVVAGGGRTEKPLVKAGKSFYKYRSKAVKWPRVRGVAMNAVDHPFGGGGRQHPGRPKTVSRGTPPGRKVGSIAARRTGKR</sequence>
<evidence type="ECO:0000255" key="1">
    <source>
        <dbReference type="HAMAP-Rule" id="MF_01320"/>
    </source>
</evidence>
<evidence type="ECO:0000256" key="2">
    <source>
        <dbReference type="SAM" id="MobiDB-lite"/>
    </source>
</evidence>
<evidence type="ECO:0000305" key="3"/>
<dbReference type="EMBL" id="CP000477">
    <property type="protein sequence ID" value="ABK15491.1"/>
    <property type="molecule type" value="Genomic_DNA"/>
</dbReference>
<dbReference type="RefSeq" id="WP_011696869.1">
    <property type="nucleotide sequence ID" value="NC_008553.1"/>
</dbReference>
<dbReference type="SMR" id="A0B9W7"/>
<dbReference type="STRING" id="349307.Mthe_1725"/>
<dbReference type="GeneID" id="4462918"/>
<dbReference type="KEGG" id="mtp:Mthe_1725"/>
<dbReference type="HOGENOM" id="CLU_036235_0_3_2"/>
<dbReference type="OrthoDB" id="5987at2157"/>
<dbReference type="Proteomes" id="UP000000674">
    <property type="component" value="Chromosome"/>
</dbReference>
<dbReference type="GO" id="GO:0022625">
    <property type="term" value="C:cytosolic large ribosomal subunit"/>
    <property type="evidence" value="ECO:0007669"/>
    <property type="project" value="TreeGrafter"/>
</dbReference>
<dbReference type="GO" id="GO:0019843">
    <property type="term" value="F:rRNA binding"/>
    <property type="evidence" value="ECO:0007669"/>
    <property type="project" value="UniProtKB-UniRule"/>
</dbReference>
<dbReference type="GO" id="GO:0003735">
    <property type="term" value="F:structural constituent of ribosome"/>
    <property type="evidence" value="ECO:0007669"/>
    <property type="project" value="InterPro"/>
</dbReference>
<dbReference type="GO" id="GO:0002181">
    <property type="term" value="P:cytoplasmic translation"/>
    <property type="evidence" value="ECO:0007669"/>
    <property type="project" value="TreeGrafter"/>
</dbReference>
<dbReference type="FunFam" id="4.10.950.10:FF:000002">
    <property type="entry name" value="60S ribosomal protein L2"/>
    <property type="match status" value="1"/>
</dbReference>
<dbReference type="Gene3D" id="2.30.30.30">
    <property type="match status" value="1"/>
</dbReference>
<dbReference type="Gene3D" id="2.40.50.140">
    <property type="entry name" value="Nucleic acid-binding proteins"/>
    <property type="match status" value="1"/>
</dbReference>
<dbReference type="Gene3D" id="4.10.950.10">
    <property type="entry name" value="Ribosomal protein L2, domain 3"/>
    <property type="match status" value="1"/>
</dbReference>
<dbReference type="HAMAP" id="MF_01320_A">
    <property type="entry name" value="Ribosomal_uL2_A"/>
    <property type="match status" value="1"/>
</dbReference>
<dbReference type="InterPro" id="IPR012340">
    <property type="entry name" value="NA-bd_OB-fold"/>
</dbReference>
<dbReference type="InterPro" id="IPR014722">
    <property type="entry name" value="Rib_uL2_dom2"/>
</dbReference>
<dbReference type="InterPro" id="IPR002171">
    <property type="entry name" value="Ribosomal_uL2"/>
</dbReference>
<dbReference type="InterPro" id="IPR023672">
    <property type="entry name" value="Ribosomal_uL2_arc_euk"/>
</dbReference>
<dbReference type="InterPro" id="IPR022669">
    <property type="entry name" value="Ribosomal_uL2_C"/>
</dbReference>
<dbReference type="InterPro" id="IPR022671">
    <property type="entry name" value="Ribosomal_uL2_CS"/>
</dbReference>
<dbReference type="InterPro" id="IPR014726">
    <property type="entry name" value="Ribosomal_uL2_dom3"/>
</dbReference>
<dbReference type="InterPro" id="IPR022666">
    <property type="entry name" value="Ribosomal_uL2_RNA-bd_dom"/>
</dbReference>
<dbReference type="InterPro" id="IPR008991">
    <property type="entry name" value="Translation_prot_SH3-like_sf"/>
</dbReference>
<dbReference type="NCBIfam" id="NF007180">
    <property type="entry name" value="PRK09612.1"/>
    <property type="match status" value="1"/>
</dbReference>
<dbReference type="PANTHER" id="PTHR13691:SF16">
    <property type="entry name" value="LARGE RIBOSOMAL SUBUNIT PROTEIN UL2"/>
    <property type="match status" value="1"/>
</dbReference>
<dbReference type="PANTHER" id="PTHR13691">
    <property type="entry name" value="RIBOSOMAL PROTEIN L2"/>
    <property type="match status" value="1"/>
</dbReference>
<dbReference type="Pfam" id="PF00181">
    <property type="entry name" value="Ribosomal_L2"/>
    <property type="match status" value="1"/>
</dbReference>
<dbReference type="Pfam" id="PF03947">
    <property type="entry name" value="Ribosomal_L2_C"/>
    <property type="match status" value="1"/>
</dbReference>
<dbReference type="PIRSF" id="PIRSF002158">
    <property type="entry name" value="Ribosomal_L2"/>
    <property type="match status" value="1"/>
</dbReference>
<dbReference type="SMART" id="SM01383">
    <property type="entry name" value="Ribosomal_L2"/>
    <property type="match status" value="1"/>
</dbReference>
<dbReference type="SMART" id="SM01382">
    <property type="entry name" value="Ribosomal_L2_C"/>
    <property type="match status" value="1"/>
</dbReference>
<dbReference type="SUPFAM" id="SSF50249">
    <property type="entry name" value="Nucleic acid-binding proteins"/>
    <property type="match status" value="1"/>
</dbReference>
<dbReference type="SUPFAM" id="SSF50104">
    <property type="entry name" value="Translation proteins SH3-like domain"/>
    <property type="match status" value="1"/>
</dbReference>
<dbReference type="PROSITE" id="PS00467">
    <property type="entry name" value="RIBOSOMAL_L2"/>
    <property type="match status" value="1"/>
</dbReference>
<keyword id="KW-1185">Reference proteome</keyword>
<keyword id="KW-0687">Ribonucleoprotein</keyword>
<keyword id="KW-0689">Ribosomal protein</keyword>
<keyword id="KW-0694">RNA-binding</keyword>
<keyword id="KW-0699">rRNA-binding</keyword>
<feature type="chain" id="PRO_0000310053" description="Large ribosomal subunit protein uL2">
    <location>
        <begin position="1"/>
        <end position="236"/>
    </location>
</feature>
<feature type="region of interest" description="Disordered" evidence="2">
    <location>
        <begin position="198"/>
        <end position="236"/>
    </location>
</feature>
<organism>
    <name type="scientific">Methanothrix thermoacetophila (strain DSM 6194 / JCM 14653 / NBRC 101360 / PT)</name>
    <name type="common">Methanosaeta thermophila</name>
    <dbReference type="NCBI Taxonomy" id="349307"/>
    <lineage>
        <taxon>Archaea</taxon>
        <taxon>Methanobacteriati</taxon>
        <taxon>Methanobacteriota</taxon>
        <taxon>Stenosarchaea group</taxon>
        <taxon>Methanomicrobia</taxon>
        <taxon>Methanotrichales</taxon>
        <taxon>Methanotrichaceae</taxon>
        <taxon>Methanothrix</taxon>
    </lineage>
</organism>